<sequence>MVLAAPLLLGFLLLALELRPRGEAAEGPAAAAAAAAAAAGVGGERSSRPAPSAPPEPDGCPVCVWRQHSRELRLESIKSQILSKLRLKEAPNISREVVKQLLPKAPPLQQILDLHDFQGDALQPEDFLEEDEYHATTETVISMAQETDPAVQTDGSPLCCHFHFSPKVMFTKVLKAQLWVYLRPVPRPATVYLQILRLKPLTGEGTAGGGGGGRRHIRIRSLKIELHSRSGHWQSIDFKQVLHSWFRQPQSNWGIEINAFDPSGTDLAVTSLGPGAEGLHPFMELRVLENTKRSRRNLGLDCDEHSSESRCCRYPLTVDFEAFGWDWIIAPKRYKANYCSGQCEYMFMQKYPHTHLVQQANPRGSAGPCCTPTKMSPINMLYFNDKQQIIYGKIPGMVVDRCGCS</sequence>
<evidence type="ECO:0000250" key="1"/>
<evidence type="ECO:0000250" key="2">
    <source>
        <dbReference type="UniProtKB" id="O95390"/>
    </source>
</evidence>
<evidence type="ECO:0000255" key="3"/>
<evidence type="ECO:0000269" key="4">
    <source>
    </source>
</evidence>
<evidence type="ECO:0000269" key="5">
    <source>
    </source>
</evidence>
<evidence type="ECO:0000269" key="6">
    <source>
    </source>
</evidence>
<evidence type="ECO:0000269" key="7">
    <source>
    </source>
</evidence>
<evidence type="ECO:0000269" key="8">
    <source>
    </source>
</evidence>
<evidence type="ECO:0000305" key="9"/>
<keyword id="KW-0165">Cleavage on pair of basic residues</keyword>
<keyword id="KW-0202">Cytokine</keyword>
<keyword id="KW-0903">Direct protein sequencing</keyword>
<keyword id="KW-1015">Disulfide bond</keyword>
<keyword id="KW-0325">Glycoprotein</keyword>
<keyword id="KW-0339">Growth factor</keyword>
<keyword id="KW-1185">Reference proteome</keyword>
<keyword id="KW-0964">Secreted</keyword>
<keyword id="KW-0732">Signal</keyword>
<gene>
    <name type="primary">Gdf11</name>
    <name type="synonym">Bmp11</name>
</gene>
<reference key="1">
    <citation type="journal article" date="1999" name="Dev. Biol.">
        <title>A novel BMP expressed in developing mouse limb, spinal cord, and tail bud is a potent mesoderm inducer in Xenopus embryos.</title>
        <authorList>
            <person name="Gamer L.W."/>
            <person name="Wolfman N.M."/>
            <person name="Celeste A.J."/>
            <person name="Hattersley G."/>
            <person name="Hewick R."/>
            <person name="Rosen V."/>
        </authorList>
    </citation>
    <scope>NUCLEOTIDE SEQUENCE [GENOMIC DNA]</scope>
    <scope>DEVELOPMENTAL STAGE</scope>
</reference>
<reference key="2">
    <citation type="journal article" date="1999" name="Nat. Genet.">
        <title>Regulation of anterior/posterior patterning of the axial skeleton by growth/differentiation factor 11.</title>
        <authorList>
            <person name="McPherron A.C."/>
            <person name="Lawler A.M."/>
            <person name="Lee S.-J."/>
        </authorList>
    </citation>
    <scope>NUCLEOTIDE SEQUENCE [GENOMIC DNA]</scope>
    <scope>FUNCTION</scope>
    <scope>DISRUPTION PHENOTYPE</scope>
    <source>
        <strain>129/SvJ</strain>
    </source>
</reference>
<reference key="3">
    <citation type="journal article" date="1999" name="Mech. Dev.">
        <title>Expression of growth/differentiation factor 11, a new member of the BMP/TGFbeta superfamily during mouse embryogenesis.</title>
        <authorList>
            <person name="Nakashima M."/>
            <person name="Toyono T."/>
            <person name="Akamine A."/>
            <person name="Joyner A."/>
        </authorList>
    </citation>
    <scope>NUCLEOTIDE SEQUENCE [MRNA] OF 75-405</scope>
</reference>
<reference key="4">
    <citation type="journal article" date="2005" name="Mol. Cell. Biol.">
        <title>GDF11 forms a bone morphogenetic protein 1-activated latent complex that can modulate nerve growth factor-induced differentiation of PC12 cells.</title>
        <authorList>
            <person name="Ge G."/>
            <person name="Hopkins D.R."/>
            <person name="Ho W.B."/>
            <person name="Greenspan D.S."/>
        </authorList>
    </citation>
    <scope>PROTEIN SEQUENCE OF 120-125</scope>
    <scope>PROTEOLYTIC CLEAVAGE</scope>
    <scope>MUTAGENESIS OF ASP-120</scope>
</reference>
<reference key="5">
    <citation type="journal article" date="2002" name="Genes Dev.">
        <title>Activin type IIA and IIB receptors mediate Gdf11 signaling in axial vertebral patterning.</title>
        <authorList>
            <person name="Oh S.P."/>
            <person name="Yeo C.Y."/>
            <person name="Lee Y."/>
            <person name="Schrewe H."/>
            <person name="Whitman M."/>
            <person name="Li E."/>
        </authorList>
    </citation>
    <scope>FUNCTION</scope>
    <scope>INTERACTION WITH ACVR2A AND ACVR2B</scope>
</reference>
<reference key="6">
    <citation type="journal article" date="2006" name="EMBO Rep.">
        <title>Growth differentiation factor 11 signals through the transforming growth factor-beta receptor ALK5 to regionalize the anterior-posterior axis.</title>
        <authorList>
            <person name="Andersson O."/>
            <person name="Reissmann E."/>
            <person name="Ibanez C.F."/>
        </authorList>
    </citation>
    <scope>FUNCTION</scope>
    <scope>INTERACTION WITH ACVR2B</scope>
</reference>
<name>GDF11_MOUSE</name>
<accession>Q9Z1W4</accession>
<accession>Q9QX55</accession>
<accession>Q9R221</accession>
<organism>
    <name type="scientific">Mus musculus</name>
    <name type="common">Mouse</name>
    <dbReference type="NCBI Taxonomy" id="10090"/>
    <lineage>
        <taxon>Eukaryota</taxon>
        <taxon>Metazoa</taxon>
        <taxon>Chordata</taxon>
        <taxon>Craniata</taxon>
        <taxon>Vertebrata</taxon>
        <taxon>Euteleostomi</taxon>
        <taxon>Mammalia</taxon>
        <taxon>Eutheria</taxon>
        <taxon>Euarchontoglires</taxon>
        <taxon>Glires</taxon>
        <taxon>Rodentia</taxon>
        <taxon>Myomorpha</taxon>
        <taxon>Muroidea</taxon>
        <taxon>Muridae</taxon>
        <taxon>Murinae</taxon>
        <taxon>Mus</taxon>
        <taxon>Mus</taxon>
    </lineage>
</organism>
<comment type="function">
    <text evidence="2 5 6 8">Secreted signal that acts globally to regulate anterior/posterior axial patterning during development (PubMed:10391213). May play critical roles in patterning both mesodermal and neural tissues (PubMed:10391213). It is required for proper vertebral patterning and orofacial development (By similarity). Signals through activin receptors type-2, ACVR2A and ACVR2B, and activin receptors type-1, ACVR1B, ACVR1C and TGFBR1 leading to the phosphorylation of SMAD2 and SMAD3 (PubMed:12414726, PubMed:16845371).</text>
</comment>
<comment type="subunit">
    <text evidence="2 6 8">Homodimer; disulfide-linked (By similarity). Interacts directly with ACVR2B (PubMed:12414726, PubMed:16845371). Interacts directly with ACVR2A (PubMed:12414726). Interacts with ACVR1B, TGFBR1 and ACVR1C in an ACVR2B-dependent manner (PubMed:16845371). Interacts with FST isoform 2/FS288 (By similarity).</text>
</comment>
<comment type="subcellular location">
    <subcellularLocation>
        <location evidence="9">Secreted</location>
    </subcellularLocation>
</comment>
<comment type="tissue specificity">
    <text>Highly expressed in the developing limb bud, initially detected in the distal mesenchyme, and later localizing to regions around the developing bones. Is also expressed in adult dental pulp and brain.</text>
</comment>
<comment type="developmental stage">
    <text evidence="4 5">First strongly expressed in restricted domains at 8.5 dpc where it is highest in the tail bud. At 10.5 dpc, expressed in the branchial arches, limb bud, tail bud and posterior dorsal neural tube. Later, expressed in terminally-differentiated odontoblasts, the nasal epithelium, retina and specific regions of the brain.</text>
</comment>
<comment type="PTM">
    <text evidence="2 7">Synthesized as large precursor molecule that undergoes proteolytic cleavage by furin-like proteases (By similarity). This produces an inactive form consisting of the mature C-terminal portion non-covalently bound to its cleaved N-terminal propeptide. Activation of the mature form requires additional cleavage of the propeptide by a tolloid-like metalloproteinase.</text>
</comment>
<comment type="disruption phenotype">
    <text evidence="5">Deficient mice die neonatally showing altered patterning of the axial skeleton and impaired renal, palate, stomach, spleen and pancreatic development.</text>
</comment>
<comment type="similarity">
    <text evidence="9">Belongs to the TGF-beta family.</text>
</comment>
<feature type="signal peptide" evidence="3">
    <location>
        <begin position="1"/>
        <end position="20"/>
    </location>
</feature>
<feature type="propeptide" id="PRO_0000033988" evidence="1">
    <location>
        <begin position="21"/>
        <end position="296"/>
    </location>
</feature>
<feature type="chain" id="PRO_0000033989" description="Growth/differentiation factor 11">
    <location>
        <begin position="297"/>
        <end position="405"/>
    </location>
</feature>
<feature type="site" description="Cleavage" evidence="7">
    <location>
        <begin position="119"/>
        <end position="120"/>
    </location>
</feature>
<feature type="site" description="Cleavage; by FURIN" evidence="2">
    <location>
        <position position="296"/>
    </location>
</feature>
<feature type="glycosylation site" description="N-linked (GlcNAc...) asparagine" evidence="3">
    <location>
        <position position="92"/>
    </location>
</feature>
<feature type="disulfide bond" evidence="2">
    <location>
        <begin position="302"/>
        <end position="312"/>
    </location>
</feature>
<feature type="disulfide bond" evidence="2">
    <location>
        <begin position="311"/>
        <end position="370"/>
    </location>
</feature>
<feature type="disulfide bond" evidence="2">
    <location>
        <begin position="339"/>
        <end position="402"/>
    </location>
</feature>
<feature type="disulfide bond" evidence="2">
    <location>
        <begin position="343"/>
        <end position="404"/>
    </location>
</feature>
<feature type="disulfide bond" description="Interchain" evidence="2">
    <location>
        <position position="369"/>
    </location>
</feature>
<feature type="mutagenesis site" description="Inhibits processing of prodomain." evidence="7">
    <original>D</original>
    <variation>A</variation>
    <location>
        <position position="120"/>
    </location>
</feature>
<feature type="sequence conflict" description="In Ref. 3; AAD05267." evidence="9" ref="3">
    <original>E</original>
    <variation>G</variation>
    <location>
        <position position="75"/>
    </location>
</feature>
<feature type="sequence conflict" description="In Ref. 2; AAF21633." evidence="9" ref="2">
    <original>T</original>
    <variation>N</variation>
    <location>
        <position position="171"/>
    </location>
</feature>
<protein>
    <recommendedName>
        <fullName>Growth/differentiation factor 11</fullName>
        <shortName>GDF-11</shortName>
    </recommendedName>
    <alternativeName>
        <fullName>Bone morphogenetic protein 11</fullName>
        <shortName>BMP-11</shortName>
    </alternativeName>
</protein>
<dbReference type="EMBL" id="AF100906">
    <property type="protein sequence ID" value="AAC72853.1"/>
    <property type="molecule type" value="Genomic_DNA"/>
</dbReference>
<dbReference type="EMBL" id="AF100904">
    <property type="protein sequence ID" value="AAC72853.1"/>
    <property type="status" value="JOINED"/>
    <property type="molecule type" value="Genomic_DNA"/>
</dbReference>
<dbReference type="EMBL" id="AF100905">
    <property type="protein sequence ID" value="AAC72853.1"/>
    <property type="status" value="JOINED"/>
    <property type="molecule type" value="Genomic_DNA"/>
</dbReference>
<dbReference type="EMBL" id="AF028337">
    <property type="protein sequence ID" value="AAF21633.1"/>
    <property type="molecule type" value="Genomic_DNA"/>
</dbReference>
<dbReference type="EMBL" id="AF028335">
    <property type="protein sequence ID" value="AAF21633.1"/>
    <property type="status" value="JOINED"/>
    <property type="molecule type" value="Genomic_DNA"/>
</dbReference>
<dbReference type="EMBL" id="AF028336">
    <property type="protein sequence ID" value="AAF21633.1"/>
    <property type="status" value="JOINED"/>
    <property type="molecule type" value="Genomic_DNA"/>
</dbReference>
<dbReference type="EMBL" id="AF092734">
    <property type="protein sequence ID" value="AAD05267.1"/>
    <property type="molecule type" value="mRNA"/>
</dbReference>
<dbReference type="CCDS" id="CCDS24296.1"/>
<dbReference type="RefSeq" id="NP_034402.1">
    <property type="nucleotide sequence ID" value="NM_010272.2"/>
</dbReference>
<dbReference type="SMR" id="Q9Z1W4"/>
<dbReference type="BioGRID" id="199886">
    <property type="interactions" value="3"/>
</dbReference>
<dbReference type="CORUM" id="Q9Z1W4"/>
<dbReference type="DIP" id="DIP-29907N"/>
<dbReference type="FunCoup" id="Q9Z1W4">
    <property type="interactions" value="611"/>
</dbReference>
<dbReference type="IntAct" id="Q9Z1W4">
    <property type="interactions" value="5"/>
</dbReference>
<dbReference type="MINT" id="Q9Z1W4"/>
<dbReference type="STRING" id="10090.ENSMUSP00000026408"/>
<dbReference type="GlyCosmos" id="Q9Z1W4">
    <property type="glycosylation" value="1 site, No reported glycans"/>
</dbReference>
<dbReference type="GlyGen" id="Q9Z1W4">
    <property type="glycosylation" value="1 site, 1 N-linked glycan (1 site)"/>
</dbReference>
<dbReference type="iPTMnet" id="Q9Z1W4"/>
<dbReference type="PhosphoSitePlus" id="Q9Z1W4"/>
<dbReference type="PaxDb" id="10090-ENSMUSP00000026408"/>
<dbReference type="PeptideAtlas" id="Q9Z1W4"/>
<dbReference type="ProteomicsDB" id="265739"/>
<dbReference type="Antibodypedia" id="27725">
    <property type="antibodies" value="304 antibodies from 34 providers"/>
</dbReference>
<dbReference type="DNASU" id="14561"/>
<dbReference type="Ensembl" id="ENSMUST00000026408.7">
    <property type="protein sequence ID" value="ENSMUSP00000026408.7"/>
    <property type="gene ID" value="ENSMUSG00000025352.7"/>
</dbReference>
<dbReference type="GeneID" id="14561"/>
<dbReference type="KEGG" id="mmu:14561"/>
<dbReference type="UCSC" id="uc007hot.1">
    <property type="organism name" value="mouse"/>
</dbReference>
<dbReference type="AGR" id="MGI:1338027"/>
<dbReference type="CTD" id="10220"/>
<dbReference type="MGI" id="MGI:1338027">
    <property type="gene designation" value="Gdf11"/>
</dbReference>
<dbReference type="VEuPathDB" id="HostDB:ENSMUSG00000025352"/>
<dbReference type="eggNOG" id="KOG3900">
    <property type="taxonomic scope" value="Eukaryota"/>
</dbReference>
<dbReference type="GeneTree" id="ENSGT00940000161052"/>
<dbReference type="HOGENOM" id="CLU_020515_6_1_1"/>
<dbReference type="InParanoid" id="Q9Z1W4"/>
<dbReference type="OMA" id="QADAPFE"/>
<dbReference type="OrthoDB" id="5948587at2759"/>
<dbReference type="PhylomeDB" id="Q9Z1W4"/>
<dbReference type="TreeFam" id="TF318514"/>
<dbReference type="BioGRID-ORCS" id="14561">
    <property type="hits" value="3 hits in 77 CRISPR screens"/>
</dbReference>
<dbReference type="PRO" id="PR:Q9Z1W4"/>
<dbReference type="Proteomes" id="UP000000589">
    <property type="component" value="Chromosome 10"/>
</dbReference>
<dbReference type="RNAct" id="Q9Z1W4">
    <property type="molecule type" value="protein"/>
</dbReference>
<dbReference type="Bgee" id="ENSMUSG00000025352">
    <property type="expression patterns" value="Expressed in dorsal root ganglion and 109 other cell types or tissues"/>
</dbReference>
<dbReference type="GO" id="GO:0005615">
    <property type="term" value="C:extracellular space"/>
    <property type="evidence" value="ECO:0000314"/>
    <property type="project" value="MGI"/>
</dbReference>
<dbReference type="GO" id="GO:0032991">
    <property type="term" value="C:protein-containing complex"/>
    <property type="evidence" value="ECO:0000266"/>
    <property type="project" value="MGI"/>
</dbReference>
<dbReference type="GO" id="GO:0005125">
    <property type="term" value="F:cytokine activity"/>
    <property type="evidence" value="ECO:0007669"/>
    <property type="project" value="UniProtKB-KW"/>
</dbReference>
<dbReference type="GO" id="GO:0008083">
    <property type="term" value="F:growth factor activity"/>
    <property type="evidence" value="ECO:0007669"/>
    <property type="project" value="UniProtKB-KW"/>
</dbReference>
<dbReference type="GO" id="GO:0032924">
    <property type="term" value="P:activin receptor signaling pathway"/>
    <property type="evidence" value="ECO:0007669"/>
    <property type="project" value="Ensembl"/>
</dbReference>
<dbReference type="GO" id="GO:0035881">
    <property type="term" value="P:amacrine cell differentiation"/>
    <property type="evidence" value="ECO:0000314"/>
    <property type="project" value="MGI"/>
</dbReference>
<dbReference type="GO" id="GO:0009887">
    <property type="term" value="P:animal organ morphogenesis"/>
    <property type="evidence" value="ECO:0000315"/>
    <property type="project" value="MGI"/>
</dbReference>
<dbReference type="GO" id="GO:0009952">
    <property type="term" value="P:anterior/posterior pattern specification"/>
    <property type="evidence" value="ECO:0000315"/>
    <property type="project" value="MGI"/>
</dbReference>
<dbReference type="GO" id="GO:0048593">
    <property type="term" value="P:camera-type eye morphogenesis"/>
    <property type="evidence" value="ECO:0000315"/>
    <property type="project" value="MGI"/>
</dbReference>
<dbReference type="GO" id="GO:0008283">
    <property type="term" value="P:cell population proliferation"/>
    <property type="evidence" value="ECO:0000315"/>
    <property type="project" value="MGI"/>
</dbReference>
<dbReference type="GO" id="GO:0001656">
    <property type="term" value="P:metanephros development"/>
    <property type="evidence" value="ECO:0000314"/>
    <property type="project" value="MGI"/>
</dbReference>
<dbReference type="GO" id="GO:1902870">
    <property type="term" value="P:negative regulation of amacrine cell differentiation"/>
    <property type="evidence" value="ECO:0000314"/>
    <property type="project" value="MGI"/>
</dbReference>
<dbReference type="GO" id="GO:0008285">
    <property type="term" value="P:negative regulation of cell population proliferation"/>
    <property type="evidence" value="ECO:0000315"/>
    <property type="project" value="MGI"/>
</dbReference>
<dbReference type="GO" id="GO:0045665">
    <property type="term" value="P:negative regulation of neuron differentiation"/>
    <property type="evidence" value="ECO:0000314"/>
    <property type="project" value="MGI"/>
</dbReference>
<dbReference type="GO" id="GO:0030182">
    <property type="term" value="P:neuron differentiation"/>
    <property type="evidence" value="ECO:0000314"/>
    <property type="project" value="MGI"/>
</dbReference>
<dbReference type="GO" id="GO:0031016">
    <property type="term" value="P:pancreas development"/>
    <property type="evidence" value="ECO:0000315"/>
    <property type="project" value="MGI"/>
</dbReference>
<dbReference type="GO" id="GO:0060391">
    <property type="term" value="P:positive regulation of SMAD protein signal transduction"/>
    <property type="evidence" value="ECO:0000314"/>
    <property type="project" value="UniProtKB"/>
</dbReference>
<dbReference type="GO" id="GO:0060021">
    <property type="term" value="P:roof of mouth development"/>
    <property type="evidence" value="ECO:0000316"/>
    <property type="project" value="MGI"/>
</dbReference>
<dbReference type="GO" id="GO:0001501">
    <property type="term" value="P:skeletal system development"/>
    <property type="evidence" value="ECO:0000316"/>
    <property type="project" value="MGI"/>
</dbReference>
<dbReference type="GO" id="GO:0021512">
    <property type="term" value="P:spinal cord anterior/posterior patterning"/>
    <property type="evidence" value="ECO:0000315"/>
    <property type="project" value="MGI"/>
</dbReference>
<dbReference type="GO" id="GO:0072560">
    <property type="term" value="P:type B pancreatic cell maturation"/>
    <property type="evidence" value="ECO:0000315"/>
    <property type="project" value="MGI"/>
</dbReference>
<dbReference type="GO" id="GO:0001657">
    <property type="term" value="P:ureteric bud development"/>
    <property type="evidence" value="ECO:0000315"/>
    <property type="project" value="MGI"/>
</dbReference>
<dbReference type="CDD" id="cd19388">
    <property type="entry name" value="TGF_beta_GDF8"/>
    <property type="match status" value="1"/>
</dbReference>
<dbReference type="FunFam" id="2.60.120.970:FF:000003">
    <property type="entry name" value="Growth differentiation factor 11"/>
    <property type="match status" value="1"/>
</dbReference>
<dbReference type="FunFam" id="2.10.90.10:FF:000006">
    <property type="entry name" value="growth/differentiation factor 8"/>
    <property type="match status" value="1"/>
</dbReference>
<dbReference type="Gene3D" id="2.60.120.970">
    <property type="match status" value="1"/>
</dbReference>
<dbReference type="Gene3D" id="2.10.90.10">
    <property type="entry name" value="Cystine-knot cytokines"/>
    <property type="match status" value="1"/>
</dbReference>
<dbReference type="InterPro" id="IPR029034">
    <property type="entry name" value="Cystine-knot_cytokine"/>
</dbReference>
<dbReference type="InterPro" id="IPR001839">
    <property type="entry name" value="TGF-b_C"/>
</dbReference>
<dbReference type="InterPro" id="IPR001111">
    <property type="entry name" value="TGF-b_propeptide"/>
</dbReference>
<dbReference type="InterPro" id="IPR015615">
    <property type="entry name" value="TGF-beta-rel"/>
</dbReference>
<dbReference type="InterPro" id="IPR017948">
    <property type="entry name" value="TGFb_CS"/>
</dbReference>
<dbReference type="PANTHER" id="PTHR11848:SF166">
    <property type="entry name" value="GROWTH_DIFFERENTIATION FACTOR 11"/>
    <property type="match status" value="1"/>
</dbReference>
<dbReference type="PANTHER" id="PTHR11848">
    <property type="entry name" value="TGF-BETA FAMILY"/>
    <property type="match status" value="1"/>
</dbReference>
<dbReference type="Pfam" id="PF00019">
    <property type="entry name" value="TGF_beta"/>
    <property type="match status" value="1"/>
</dbReference>
<dbReference type="Pfam" id="PF00688">
    <property type="entry name" value="TGFb_propeptide"/>
    <property type="match status" value="1"/>
</dbReference>
<dbReference type="SMART" id="SM00204">
    <property type="entry name" value="TGFB"/>
    <property type="match status" value="1"/>
</dbReference>
<dbReference type="SUPFAM" id="SSF57501">
    <property type="entry name" value="Cystine-knot cytokines"/>
    <property type="match status" value="1"/>
</dbReference>
<dbReference type="PROSITE" id="PS00250">
    <property type="entry name" value="TGF_BETA_1"/>
    <property type="match status" value="1"/>
</dbReference>
<dbReference type="PROSITE" id="PS51362">
    <property type="entry name" value="TGF_BETA_2"/>
    <property type="match status" value="1"/>
</dbReference>
<proteinExistence type="evidence at protein level"/>